<comment type="function">
    <text evidence="1">Specifically methylates the N7 position of guanine in position 535 of 16S rRNA.</text>
</comment>
<comment type="subcellular location">
    <subcellularLocation>
        <location evidence="1">Cytoplasm</location>
    </subcellularLocation>
</comment>
<comment type="similarity">
    <text evidence="1">Belongs to the methyltransferase superfamily. RNA methyltransferase RsmG family.</text>
</comment>
<evidence type="ECO:0000255" key="1">
    <source>
        <dbReference type="HAMAP-Rule" id="MF_00074"/>
    </source>
</evidence>
<protein>
    <recommendedName>
        <fullName evidence="1">Ribosomal RNA small subunit methyltransferase G</fullName>
        <ecNumber evidence="1">2.1.1.-</ecNumber>
    </recommendedName>
    <alternativeName>
        <fullName evidence="1">16S rRNA 7-methylguanosine methyltransferase</fullName>
        <shortName evidence="1">16S rRNA m7G methyltransferase</shortName>
    </alternativeName>
</protein>
<proteinExistence type="inferred from homology"/>
<gene>
    <name evidence="1" type="primary">rsmG</name>
    <name type="ordered locus">BCE_5633</name>
</gene>
<dbReference type="EC" id="2.1.1.-" evidence="1"/>
<dbReference type="EMBL" id="AE017194">
    <property type="protein sequence ID" value="AAS44533.1"/>
    <property type="molecule type" value="Genomic_DNA"/>
</dbReference>
<dbReference type="SMR" id="Q72WU5"/>
<dbReference type="KEGG" id="bca:BCE_5633"/>
<dbReference type="HOGENOM" id="CLU_065341_0_2_9"/>
<dbReference type="Proteomes" id="UP000002527">
    <property type="component" value="Chromosome"/>
</dbReference>
<dbReference type="GO" id="GO:0005829">
    <property type="term" value="C:cytosol"/>
    <property type="evidence" value="ECO:0007669"/>
    <property type="project" value="TreeGrafter"/>
</dbReference>
<dbReference type="GO" id="GO:0070043">
    <property type="term" value="F:rRNA (guanine-N7-)-methyltransferase activity"/>
    <property type="evidence" value="ECO:0007669"/>
    <property type="project" value="UniProtKB-UniRule"/>
</dbReference>
<dbReference type="CDD" id="cd02440">
    <property type="entry name" value="AdoMet_MTases"/>
    <property type="match status" value="1"/>
</dbReference>
<dbReference type="FunFam" id="3.40.50.150:FF:000041">
    <property type="entry name" value="Ribosomal RNA small subunit methyltransferase G"/>
    <property type="match status" value="1"/>
</dbReference>
<dbReference type="Gene3D" id="3.40.50.150">
    <property type="entry name" value="Vaccinia Virus protein VP39"/>
    <property type="match status" value="1"/>
</dbReference>
<dbReference type="HAMAP" id="MF_00074">
    <property type="entry name" value="16SrRNA_methyltr_G"/>
    <property type="match status" value="1"/>
</dbReference>
<dbReference type="InterPro" id="IPR003682">
    <property type="entry name" value="rRNA_ssu_MeTfrase_G"/>
</dbReference>
<dbReference type="InterPro" id="IPR029063">
    <property type="entry name" value="SAM-dependent_MTases_sf"/>
</dbReference>
<dbReference type="NCBIfam" id="TIGR00138">
    <property type="entry name" value="rsmG_gidB"/>
    <property type="match status" value="1"/>
</dbReference>
<dbReference type="PANTHER" id="PTHR31760">
    <property type="entry name" value="S-ADENOSYL-L-METHIONINE-DEPENDENT METHYLTRANSFERASES SUPERFAMILY PROTEIN"/>
    <property type="match status" value="1"/>
</dbReference>
<dbReference type="PANTHER" id="PTHR31760:SF0">
    <property type="entry name" value="S-ADENOSYL-L-METHIONINE-DEPENDENT METHYLTRANSFERASES SUPERFAMILY PROTEIN"/>
    <property type="match status" value="1"/>
</dbReference>
<dbReference type="Pfam" id="PF02527">
    <property type="entry name" value="GidB"/>
    <property type="match status" value="1"/>
</dbReference>
<dbReference type="PIRSF" id="PIRSF003078">
    <property type="entry name" value="GidB"/>
    <property type="match status" value="1"/>
</dbReference>
<dbReference type="SUPFAM" id="SSF53335">
    <property type="entry name" value="S-adenosyl-L-methionine-dependent methyltransferases"/>
    <property type="match status" value="1"/>
</dbReference>
<reference key="1">
    <citation type="journal article" date="2004" name="Nucleic Acids Res.">
        <title>The genome sequence of Bacillus cereus ATCC 10987 reveals metabolic adaptations and a large plasmid related to Bacillus anthracis pXO1.</title>
        <authorList>
            <person name="Rasko D.A."/>
            <person name="Ravel J."/>
            <person name="Oekstad O.A."/>
            <person name="Helgason E."/>
            <person name="Cer R.Z."/>
            <person name="Jiang L."/>
            <person name="Shores K.A."/>
            <person name="Fouts D.E."/>
            <person name="Tourasse N.J."/>
            <person name="Angiuoli S.V."/>
            <person name="Kolonay J.F."/>
            <person name="Nelson W.C."/>
            <person name="Kolstoe A.-B."/>
            <person name="Fraser C.M."/>
            <person name="Read T.D."/>
        </authorList>
    </citation>
    <scope>NUCLEOTIDE SEQUENCE [LARGE SCALE GENOMIC DNA]</scope>
    <source>
        <strain>ATCC 10987 / NRS 248</strain>
    </source>
</reference>
<accession>Q72WU5</accession>
<feature type="chain" id="PRO_0000184210" description="Ribosomal RNA small subunit methyltransferase G">
    <location>
        <begin position="1"/>
        <end position="239"/>
    </location>
</feature>
<feature type="binding site" evidence="1">
    <location>
        <position position="77"/>
    </location>
    <ligand>
        <name>S-adenosyl-L-methionine</name>
        <dbReference type="ChEBI" id="CHEBI:59789"/>
    </ligand>
</feature>
<feature type="binding site" evidence="1">
    <location>
        <position position="82"/>
    </location>
    <ligand>
        <name>S-adenosyl-L-methionine</name>
        <dbReference type="ChEBI" id="CHEBI:59789"/>
    </ligand>
</feature>
<feature type="binding site" evidence="1">
    <location>
        <begin position="128"/>
        <end position="129"/>
    </location>
    <ligand>
        <name>S-adenosyl-L-methionine</name>
        <dbReference type="ChEBI" id="CHEBI:59789"/>
    </ligand>
</feature>
<feature type="binding site" evidence="1">
    <location>
        <position position="147"/>
    </location>
    <ligand>
        <name>S-adenosyl-L-methionine</name>
        <dbReference type="ChEBI" id="CHEBI:59789"/>
    </ligand>
</feature>
<sequence length="239" mass="27196">MNIEQFQSMLEEKGITLSSRQLEQFEIYFETLVEWNEKMNLTAITEKEEVYLKHFFDSITAAFYYDFSKPFSICDVGAGAGFPSIPLKICFPHLKVTIVDSLQKRINFLNHLAQKLELSDVAFCHDRAETFGKKEGVREAYDIVMARAVARLSVLSELCLPLVKVGGTFIAMKGAAANEEIENGKYALEVLGGDLKEMSTFQLPFEESERNILLIEKKRKTPKKYPRKPGTPNKLPIEK</sequence>
<keyword id="KW-0963">Cytoplasm</keyword>
<keyword id="KW-0489">Methyltransferase</keyword>
<keyword id="KW-0698">rRNA processing</keyword>
<keyword id="KW-0949">S-adenosyl-L-methionine</keyword>
<keyword id="KW-0808">Transferase</keyword>
<name>RSMG_BACC1</name>
<organism>
    <name type="scientific">Bacillus cereus (strain ATCC 10987 / NRS 248)</name>
    <dbReference type="NCBI Taxonomy" id="222523"/>
    <lineage>
        <taxon>Bacteria</taxon>
        <taxon>Bacillati</taxon>
        <taxon>Bacillota</taxon>
        <taxon>Bacilli</taxon>
        <taxon>Bacillales</taxon>
        <taxon>Bacillaceae</taxon>
        <taxon>Bacillus</taxon>
        <taxon>Bacillus cereus group</taxon>
    </lineage>
</organism>